<organism>
    <name type="scientific">Macrophomina phaseolina (strain MS6)</name>
    <name type="common">Charcoal rot fungus</name>
    <dbReference type="NCBI Taxonomy" id="1126212"/>
    <lineage>
        <taxon>Eukaryota</taxon>
        <taxon>Fungi</taxon>
        <taxon>Dikarya</taxon>
        <taxon>Ascomycota</taxon>
        <taxon>Pezizomycotina</taxon>
        <taxon>Dothideomycetes</taxon>
        <taxon>Dothideomycetes incertae sedis</taxon>
        <taxon>Botryosphaeriales</taxon>
        <taxon>Botryosphaeriaceae</taxon>
        <taxon>Macrophomina</taxon>
    </lineage>
</organism>
<name>DPMPB_MACPH</name>
<reference key="1">
    <citation type="journal article" date="2012" name="BMC Genomics">
        <title>Tools to kill: Genome of one of the most destructive plant pathogenic fungi Macrophomina phaseolina.</title>
        <authorList>
            <person name="Islam M.S."/>
            <person name="Haque M.S."/>
            <person name="Islam M.M."/>
            <person name="Emdad E.M."/>
            <person name="Halim A."/>
            <person name="Hossen Q.M.M."/>
            <person name="Hossain M.Z."/>
            <person name="Ahmed B."/>
            <person name="Rahim S."/>
            <person name="Rahman M.S."/>
            <person name="Alam M.M."/>
            <person name="Hou S."/>
            <person name="Wan X."/>
            <person name="Saito J.A."/>
            <person name="Alam M."/>
        </authorList>
    </citation>
    <scope>NUCLEOTIDE SEQUENCE [LARGE SCALE GENOMIC DNA]</scope>
    <source>
        <strain>MS6</strain>
    </source>
</reference>
<reference key="2">
    <citation type="journal article" date="2020" name="Nat. Commun.">
        <title>Synthetic biology based construction of biological activity-related library of fungal decalin-containing diterpenoid pyrones.</title>
        <authorList>
            <person name="Tsukada K."/>
            <person name="Shinki S."/>
            <person name="Kaneko A."/>
            <person name="Murakami K."/>
            <person name="Irie K."/>
            <person name="Murai M."/>
            <person name="Miyoshi H."/>
            <person name="Dan S."/>
            <person name="Kawaji K."/>
            <person name="Hayashi H."/>
            <person name="Kodama E.N."/>
            <person name="Hori A."/>
            <person name="Salim E."/>
            <person name="Kuraishi T."/>
            <person name="Hirata N."/>
            <person name="Kanda Y."/>
            <person name="Asai T."/>
        </authorList>
    </citation>
    <scope>FUNCTION</scope>
    <scope>PATHWAY</scope>
    <scope>BIOTECHNOLOGY</scope>
</reference>
<gene>
    <name evidence="3" type="primary">dpmpB</name>
    <name type="ORF">MPH_09195</name>
</gene>
<comment type="function">
    <text evidence="2 5">Terpene cyclase; part of the gene cluster that mediates the biosynthesis of diterpenoid pyrones (PubMed:32286350). The first step of the pathway is the synthesis of the alpha-pyrone moiety by the polyketide synthase dpmpA via condensation of one acetyl-CoA starter unit with 3 malonyl-CoA units and 2 methylations (Probable). The alpha-pyrone is then combined with geranylgeranyl pyrophosphate (GGPP) formed by the GGPP synthase dpmpD through the action of the prenyltransferase dpmpC to yield a linear alpha-pyrone diterpenoid (Probable). Subsequent steps in the diterpenoid pyrone biosynthetic pathway involve the decalin core formation, which is initiated by the epoxidation of the C10-C11 olefin by the FAD-dependent oxidoreductase dpmpE, and is followed by a cyclization cascade catalyzed by the terpene cyclase dpmpB (Probable). The short chain dehydrogenase/reductase dpmpG then oxidizes the 8S hydroxy group to a ketone and the short chain dehydrogenase/reductase dpmpH reduces the ketone to the 8R hydroxy group to yield higginsianin B (PubMed:32286350). Higginsianin B is further methylated by the methyltransferase dpmpI to produce the intermediate named FDDP B (PubMed:32286350). The cytochrome P450 monooxygenase dpmpJ then oxidizes the C-26 methyl to primary alcohol, producing the final diterpenoid pyrone with a C-26 primary alcohol on the gamma-pyrone moiety named FDDP C (PubMed:32286350).</text>
</comment>
<comment type="pathway">
    <text evidence="5">Secondary metabolite biosynthesis; terpenoid biosynthesis.</text>
</comment>
<comment type="subcellular location">
    <subcellularLocation>
        <location evidence="1">Membrane</location>
        <topology evidence="1">Multi-pass membrane protein</topology>
    </subcellularLocation>
</comment>
<comment type="biotechnology">
    <text evidence="2">Diterpenoid pyrones display various biological activities and FDDP C shows anti-cancer and anti-HIV activities (PubMed:32286350). FDDP C also shows inhibitory activity of 42-mer-amyloid beta aggregation that is involved in the pathogenesis of Alzheimer's disease (PubMed:32286350).</text>
</comment>
<comment type="similarity">
    <text evidence="4">Belongs to the paxB family.</text>
</comment>
<evidence type="ECO:0000255" key="1"/>
<evidence type="ECO:0000269" key="2">
    <source>
    </source>
</evidence>
<evidence type="ECO:0000303" key="3">
    <source>
    </source>
</evidence>
<evidence type="ECO:0000305" key="4"/>
<evidence type="ECO:0000305" key="5">
    <source>
    </source>
</evidence>
<feature type="chain" id="PRO_0000451531" description="Terpene cyclase dpmpB">
    <location>
        <begin position="1"/>
        <end position="243"/>
    </location>
</feature>
<feature type="transmembrane region" description="Helical" evidence="1">
    <location>
        <begin position="13"/>
        <end position="33"/>
    </location>
</feature>
<feature type="transmembrane region" description="Helical" evidence="1">
    <location>
        <begin position="51"/>
        <end position="71"/>
    </location>
</feature>
<feature type="transmembrane region" description="Helical" evidence="1">
    <location>
        <begin position="78"/>
        <end position="98"/>
    </location>
</feature>
<feature type="transmembrane region" description="Helical" evidence="1">
    <location>
        <begin position="112"/>
        <end position="132"/>
    </location>
</feature>
<feature type="transmembrane region" description="Helical" evidence="1">
    <location>
        <begin position="141"/>
        <end position="161"/>
    </location>
</feature>
<feature type="transmembrane region" description="Helical" evidence="1">
    <location>
        <begin position="169"/>
        <end position="189"/>
    </location>
</feature>
<feature type="transmembrane region" description="Helical" evidence="1">
    <location>
        <begin position="207"/>
        <end position="227"/>
    </location>
</feature>
<keyword id="KW-0456">Lyase</keyword>
<keyword id="KW-0472">Membrane</keyword>
<keyword id="KW-1185">Reference proteome</keyword>
<keyword id="KW-0812">Transmembrane</keyword>
<keyword id="KW-1133">Transmembrane helix</keyword>
<sequence>MNIVPLSQAPPEFLEVAWLADACKLLMGVGWTANYIGMIYKSIKDRTYGMALMPLCCNFAWELVYALILPFDSGMEKWVHVTGLAFNCGVMYTAIKFAPGEWAHARLVQRHLTWIFIASVAGWMSAHLALAAQLGPSLAQAWSAYGCQLLLSVGGLCQLLCRGHSRGTSYLLWFSRFFGSLVLIPQDILRYKYWRRDHEWMKSPLYLWFVSIFLILDGSYGILLWYVRRFERETAEAENRKRR</sequence>
<accession>K2RU64</accession>
<proteinExistence type="evidence at protein level"/>
<protein>
    <recommendedName>
        <fullName evidence="3">Terpene cyclase dpmpB</fullName>
        <ecNumber evidence="5">4.2.3.-</ecNumber>
    </recommendedName>
    <alternativeName>
        <fullName evidence="3">Diterpenoid pyrone biosynthesis cluster protein B</fullName>
    </alternativeName>
</protein>
<dbReference type="EC" id="4.2.3.-" evidence="5"/>
<dbReference type="EMBL" id="AHHD01000387">
    <property type="protein sequence ID" value="EKG13729.1"/>
    <property type="molecule type" value="Genomic_DNA"/>
</dbReference>
<dbReference type="VEuPathDB" id="FungiDB:MPH_09195"/>
<dbReference type="eggNOG" id="ENOG502RZAD">
    <property type="taxonomic scope" value="Eukaryota"/>
</dbReference>
<dbReference type="HOGENOM" id="CLU_087059_0_1_1"/>
<dbReference type="InParanoid" id="K2RU64"/>
<dbReference type="OrthoDB" id="5294024at2759"/>
<dbReference type="UniPathway" id="UPA00213"/>
<dbReference type="Proteomes" id="UP000007129">
    <property type="component" value="Unassembled WGS sequence"/>
</dbReference>
<dbReference type="GO" id="GO:0016020">
    <property type="term" value="C:membrane"/>
    <property type="evidence" value="ECO:0007669"/>
    <property type="project" value="UniProtKB-SubCell"/>
</dbReference>
<dbReference type="GO" id="GO:0016829">
    <property type="term" value="F:lyase activity"/>
    <property type="evidence" value="ECO:0007669"/>
    <property type="project" value="UniProtKB-KW"/>
</dbReference>
<dbReference type="GO" id="GO:0016114">
    <property type="term" value="P:terpenoid biosynthetic process"/>
    <property type="evidence" value="ECO:0007669"/>
    <property type="project" value="UniProtKB-UniPathway"/>
</dbReference>
<dbReference type="InterPro" id="IPR039020">
    <property type="entry name" value="PaxB-like"/>
</dbReference>
<dbReference type="PANTHER" id="PTHR42038">
    <property type="match status" value="1"/>
</dbReference>
<dbReference type="PANTHER" id="PTHR42038:SF2">
    <property type="entry name" value="TERPENE CYCLASE AUSL"/>
    <property type="match status" value="1"/>
</dbReference>
<dbReference type="Pfam" id="PF25129">
    <property type="entry name" value="Pyr4-TMTC"/>
    <property type="match status" value="1"/>
</dbReference>